<proteinExistence type="inferred from homology"/>
<feature type="chain" id="PRO_1000049539" description="Glycerol-3-phosphate dehydrogenase [NAD(P)+]">
    <location>
        <begin position="1"/>
        <end position="341"/>
    </location>
</feature>
<feature type="active site" description="Proton acceptor" evidence="1">
    <location>
        <position position="191"/>
    </location>
</feature>
<feature type="binding site" evidence="1">
    <location>
        <position position="14"/>
    </location>
    <ligand>
        <name>NADPH</name>
        <dbReference type="ChEBI" id="CHEBI:57783"/>
    </ligand>
</feature>
<feature type="binding site" evidence="1">
    <location>
        <position position="15"/>
    </location>
    <ligand>
        <name>NADPH</name>
        <dbReference type="ChEBI" id="CHEBI:57783"/>
    </ligand>
</feature>
<feature type="binding site" evidence="1">
    <location>
        <position position="35"/>
    </location>
    <ligand>
        <name>NADPH</name>
        <dbReference type="ChEBI" id="CHEBI:57783"/>
    </ligand>
</feature>
<feature type="binding site" evidence="1">
    <location>
        <position position="108"/>
    </location>
    <ligand>
        <name>NADPH</name>
        <dbReference type="ChEBI" id="CHEBI:57783"/>
    </ligand>
</feature>
<feature type="binding site" evidence="1">
    <location>
        <position position="108"/>
    </location>
    <ligand>
        <name>sn-glycerol 3-phosphate</name>
        <dbReference type="ChEBI" id="CHEBI:57597"/>
    </ligand>
</feature>
<feature type="binding site" evidence="1">
    <location>
        <position position="136"/>
    </location>
    <ligand>
        <name>sn-glycerol 3-phosphate</name>
        <dbReference type="ChEBI" id="CHEBI:57597"/>
    </ligand>
</feature>
<feature type="binding site" evidence="1">
    <location>
        <position position="140"/>
    </location>
    <ligand>
        <name>NADPH</name>
        <dbReference type="ChEBI" id="CHEBI:57783"/>
    </ligand>
</feature>
<feature type="binding site" evidence="1">
    <location>
        <position position="191"/>
    </location>
    <ligand>
        <name>sn-glycerol 3-phosphate</name>
        <dbReference type="ChEBI" id="CHEBI:57597"/>
    </ligand>
</feature>
<feature type="binding site" evidence="1">
    <location>
        <position position="244"/>
    </location>
    <ligand>
        <name>sn-glycerol 3-phosphate</name>
        <dbReference type="ChEBI" id="CHEBI:57597"/>
    </ligand>
</feature>
<feature type="binding site" evidence="1">
    <location>
        <position position="254"/>
    </location>
    <ligand>
        <name>sn-glycerol 3-phosphate</name>
        <dbReference type="ChEBI" id="CHEBI:57597"/>
    </ligand>
</feature>
<feature type="binding site" evidence="1">
    <location>
        <position position="255"/>
    </location>
    <ligand>
        <name>NADPH</name>
        <dbReference type="ChEBI" id="CHEBI:57783"/>
    </ligand>
</feature>
<feature type="binding site" evidence="1">
    <location>
        <position position="255"/>
    </location>
    <ligand>
        <name>sn-glycerol 3-phosphate</name>
        <dbReference type="ChEBI" id="CHEBI:57597"/>
    </ligand>
</feature>
<feature type="binding site" evidence="1">
    <location>
        <position position="256"/>
    </location>
    <ligand>
        <name>sn-glycerol 3-phosphate</name>
        <dbReference type="ChEBI" id="CHEBI:57597"/>
    </ligand>
</feature>
<feature type="binding site" evidence="1">
    <location>
        <position position="279"/>
    </location>
    <ligand>
        <name>NADPH</name>
        <dbReference type="ChEBI" id="CHEBI:57783"/>
    </ligand>
</feature>
<feature type="binding site" evidence="1">
    <location>
        <position position="281"/>
    </location>
    <ligand>
        <name>NADPH</name>
        <dbReference type="ChEBI" id="CHEBI:57783"/>
    </ligand>
</feature>
<sequence>MTEQQPVAVLGGGSFGTAVANLLAENGVPVRQWMRDPAQAEAMRVNRENPRYLKGIRLHDGVEPVNDLLATLQASELIFVALPSSALRSVLAPHAELLRGKALVSLTKGIEAQSFKLMSQILEEIAPEARIGVLSGPNLAREIAEHALTATVVASEHEDLCQQVQAVLHGRTFRVYASADRFGVELGGALKNVYAIIAGMAVALGMGENTKSMLITRALAEMTRFAVSQGANPMTFLGLAGVGDLIVTCSSPKSRNYQVGYALGQGQSLEEAVSRLGEVAEGVNTLKVLKTKAQQVQVYMPLVAGLHAILFEGRTLNQVIEHLMRAEPKTDVDFISISGFN</sequence>
<protein>
    <recommendedName>
        <fullName evidence="1">Glycerol-3-phosphate dehydrogenase [NAD(P)+]</fullName>
        <ecNumber evidence="1">1.1.1.94</ecNumber>
    </recommendedName>
    <alternativeName>
        <fullName evidence="1">NAD(P)(+)-dependent glycerol-3-phosphate dehydrogenase</fullName>
    </alternativeName>
    <alternativeName>
        <fullName evidence="1">NAD(P)H-dependent dihydroxyacetone-phosphate reductase</fullName>
    </alternativeName>
</protein>
<reference key="1">
    <citation type="submission" date="2007-05" db="EMBL/GenBank/DDBJ databases">
        <title>Complete sequence of Pseudomonas putida F1.</title>
        <authorList>
            <consortium name="US DOE Joint Genome Institute"/>
            <person name="Copeland A."/>
            <person name="Lucas S."/>
            <person name="Lapidus A."/>
            <person name="Barry K."/>
            <person name="Detter J.C."/>
            <person name="Glavina del Rio T."/>
            <person name="Hammon N."/>
            <person name="Israni S."/>
            <person name="Dalin E."/>
            <person name="Tice H."/>
            <person name="Pitluck S."/>
            <person name="Chain P."/>
            <person name="Malfatti S."/>
            <person name="Shin M."/>
            <person name="Vergez L."/>
            <person name="Schmutz J."/>
            <person name="Larimer F."/>
            <person name="Land M."/>
            <person name="Hauser L."/>
            <person name="Kyrpides N."/>
            <person name="Lykidis A."/>
            <person name="Parales R."/>
            <person name="Richardson P."/>
        </authorList>
    </citation>
    <scope>NUCLEOTIDE SEQUENCE [LARGE SCALE GENOMIC DNA]</scope>
    <source>
        <strain>ATCC 700007 / DSM 6899 / JCM 31910 / BCRC 17059 / LMG 24140 / F1</strain>
    </source>
</reference>
<gene>
    <name evidence="1" type="primary">gpsA</name>
    <name type="ordered locus">Pput_1698</name>
</gene>
<name>GPDA_PSEP1</name>
<comment type="function">
    <text evidence="1">Catalyzes the reduction of the glycolytic intermediate dihydroxyacetone phosphate (DHAP) to sn-glycerol 3-phosphate (G3P), the key precursor for phospholipid synthesis.</text>
</comment>
<comment type="catalytic activity">
    <reaction evidence="1">
        <text>sn-glycerol 3-phosphate + NAD(+) = dihydroxyacetone phosphate + NADH + H(+)</text>
        <dbReference type="Rhea" id="RHEA:11092"/>
        <dbReference type="ChEBI" id="CHEBI:15378"/>
        <dbReference type="ChEBI" id="CHEBI:57540"/>
        <dbReference type="ChEBI" id="CHEBI:57597"/>
        <dbReference type="ChEBI" id="CHEBI:57642"/>
        <dbReference type="ChEBI" id="CHEBI:57945"/>
        <dbReference type="EC" id="1.1.1.94"/>
    </reaction>
    <physiologicalReaction direction="right-to-left" evidence="1">
        <dbReference type="Rhea" id="RHEA:11094"/>
    </physiologicalReaction>
</comment>
<comment type="catalytic activity">
    <reaction evidence="1">
        <text>sn-glycerol 3-phosphate + NADP(+) = dihydroxyacetone phosphate + NADPH + H(+)</text>
        <dbReference type="Rhea" id="RHEA:11096"/>
        <dbReference type="ChEBI" id="CHEBI:15378"/>
        <dbReference type="ChEBI" id="CHEBI:57597"/>
        <dbReference type="ChEBI" id="CHEBI:57642"/>
        <dbReference type="ChEBI" id="CHEBI:57783"/>
        <dbReference type="ChEBI" id="CHEBI:58349"/>
        <dbReference type="EC" id="1.1.1.94"/>
    </reaction>
    <physiologicalReaction direction="right-to-left" evidence="1">
        <dbReference type="Rhea" id="RHEA:11098"/>
    </physiologicalReaction>
</comment>
<comment type="pathway">
    <text evidence="1">Membrane lipid metabolism; glycerophospholipid metabolism.</text>
</comment>
<comment type="subcellular location">
    <subcellularLocation>
        <location evidence="1">Cytoplasm</location>
    </subcellularLocation>
</comment>
<comment type="similarity">
    <text evidence="1">Belongs to the NAD-dependent glycerol-3-phosphate dehydrogenase family.</text>
</comment>
<evidence type="ECO:0000255" key="1">
    <source>
        <dbReference type="HAMAP-Rule" id="MF_00394"/>
    </source>
</evidence>
<dbReference type="EC" id="1.1.1.94" evidence="1"/>
<dbReference type="EMBL" id="CP000712">
    <property type="protein sequence ID" value="ABQ77854.1"/>
    <property type="molecule type" value="Genomic_DNA"/>
</dbReference>
<dbReference type="SMR" id="A5W144"/>
<dbReference type="KEGG" id="ppf:Pput_1698"/>
<dbReference type="eggNOG" id="COG0240">
    <property type="taxonomic scope" value="Bacteria"/>
</dbReference>
<dbReference type="HOGENOM" id="CLU_033449_0_2_6"/>
<dbReference type="UniPathway" id="UPA00940"/>
<dbReference type="GO" id="GO:0005829">
    <property type="term" value="C:cytosol"/>
    <property type="evidence" value="ECO:0007669"/>
    <property type="project" value="TreeGrafter"/>
</dbReference>
<dbReference type="GO" id="GO:0047952">
    <property type="term" value="F:glycerol-3-phosphate dehydrogenase [NAD(P)+] activity"/>
    <property type="evidence" value="ECO:0007669"/>
    <property type="project" value="UniProtKB-UniRule"/>
</dbReference>
<dbReference type="GO" id="GO:0051287">
    <property type="term" value="F:NAD binding"/>
    <property type="evidence" value="ECO:0007669"/>
    <property type="project" value="InterPro"/>
</dbReference>
<dbReference type="GO" id="GO:0005975">
    <property type="term" value="P:carbohydrate metabolic process"/>
    <property type="evidence" value="ECO:0007669"/>
    <property type="project" value="InterPro"/>
</dbReference>
<dbReference type="GO" id="GO:0046167">
    <property type="term" value="P:glycerol-3-phosphate biosynthetic process"/>
    <property type="evidence" value="ECO:0007669"/>
    <property type="project" value="UniProtKB-UniRule"/>
</dbReference>
<dbReference type="GO" id="GO:0046168">
    <property type="term" value="P:glycerol-3-phosphate catabolic process"/>
    <property type="evidence" value="ECO:0007669"/>
    <property type="project" value="InterPro"/>
</dbReference>
<dbReference type="GO" id="GO:0046474">
    <property type="term" value="P:glycerophospholipid biosynthetic process"/>
    <property type="evidence" value="ECO:0007669"/>
    <property type="project" value="TreeGrafter"/>
</dbReference>
<dbReference type="FunFam" id="1.10.1040.10:FF:000001">
    <property type="entry name" value="Glycerol-3-phosphate dehydrogenase [NAD(P)+]"/>
    <property type="match status" value="1"/>
</dbReference>
<dbReference type="FunFam" id="3.40.50.720:FF:000019">
    <property type="entry name" value="Glycerol-3-phosphate dehydrogenase [NAD(P)+]"/>
    <property type="match status" value="1"/>
</dbReference>
<dbReference type="Gene3D" id="1.10.1040.10">
    <property type="entry name" value="N-(1-d-carboxylethyl)-l-norvaline Dehydrogenase, domain 2"/>
    <property type="match status" value="1"/>
</dbReference>
<dbReference type="Gene3D" id="3.40.50.720">
    <property type="entry name" value="NAD(P)-binding Rossmann-like Domain"/>
    <property type="match status" value="1"/>
</dbReference>
<dbReference type="HAMAP" id="MF_00394">
    <property type="entry name" value="NAD_Glyc3P_dehydrog"/>
    <property type="match status" value="1"/>
</dbReference>
<dbReference type="InterPro" id="IPR008927">
    <property type="entry name" value="6-PGluconate_DH-like_C_sf"/>
</dbReference>
<dbReference type="InterPro" id="IPR013328">
    <property type="entry name" value="6PGD_dom2"/>
</dbReference>
<dbReference type="InterPro" id="IPR006168">
    <property type="entry name" value="G3P_DH_NAD-dep"/>
</dbReference>
<dbReference type="InterPro" id="IPR006109">
    <property type="entry name" value="G3P_DH_NAD-dep_C"/>
</dbReference>
<dbReference type="InterPro" id="IPR011128">
    <property type="entry name" value="G3P_DH_NAD-dep_N"/>
</dbReference>
<dbReference type="InterPro" id="IPR036291">
    <property type="entry name" value="NAD(P)-bd_dom_sf"/>
</dbReference>
<dbReference type="NCBIfam" id="NF000940">
    <property type="entry name" value="PRK00094.1-2"/>
    <property type="match status" value="1"/>
</dbReference>
<dbReference type="NCBIfam" id="NF000942">
    <property type="entry name" value="PRK00094.1-4"/>
    <property type="match status" value="1"/>
</dbReference>
<dbReference type="NCBIfam" id="NF000946">
    <property type="entry name" value="PRK00094.2-4"/>
    <property type="match status" value="1"/>
</dbReference>
<dbReference type="PANTHER" id="PTHR11728">
    <property type="entry name" value="GLYCEROL-3-PHOSPHATE DEHYDROGENASE"/>
    <property type="match status" value="1"/>
</dbReference>
<dbReference type="PANTHER" id="PTHR11728:SF1">
    <property type="entry name" value="GLYCEROL-3-PHOSPHATE DEHYDROGENASE [NAD(+)] 2, CHLOROPLASTIC"/>
    <property type="match status" value="1"/>
</dbReference>
<dbReference type="Pfam" id="PF07479">
    <property type="entry name" value="NAD_Gly3P_dh_C"/>
    <property type="match status" value="1"/>
</dbReference>
<dbReference type="Pfam" id="PF01210">
    <property type="entry name" value="NAD_Gly3P_dh_N"/>
    <property type="match status" value="1"/>
</dbReference>
<dbReference type="PIRSF" id="PIRSF000114">
    <property type="entry name" value="Glycerol-3-P_dh"/>
    <property type="match status" value="1"/>
</dbReference>
<dbReference type="PRINTS" id="PR00077">
    <property type="entry name" value="GPDHDRGNASE"/>
</dbReference>
<dbReference type="SUPFAM" id="SSF48179">
    <property type="entry name" value="6-phosphogluconate dehydrogenase C-terminal domain-like"/>
    <property type="match status" value="1"/>
</dbReference>
<dbReference type="SUPFAM" id="SSF51735">
    <property type="entry name" value="NAD(P)-binding Rossmann-fold domains"/>
    <property type="match status" value="1"/>
</dbReference>
<dbReference type="PROSITE" id="PS00957">
    <property type="entry name" value="NAD_G3PDH"/>
    <property type="match status" value="1"/>
</dbReference>
<organism>
    <name type="scientific">Pseudomonas putida (strain ATCC 700007 / DSM 6899 / JCM 31910 / BCRC 17059 / LMG 24140 / F1)</name>
    <dbReference type="NCBI Taxonomy" id="351746"/>
    <lineage>
        <taxon>Bacteria</taxon>
        <taxon>Pseudomonadati</taxon>
        <taxon>Pseudomonadota</taxon>
        <taxon>Gammaproteobacteria</taxon>
        <taxon>Pseudomonadales</taxon>
        <taxon>Pseudomonadaceae</taxon>
        <taxon>Pseudomonas</taxon>
    </lineage>
</organism>
<accession>A5W144</accession>
<keyword id="KW-0963">Cytoplasm</keyword>
<keyword id="KW-0444">Lipid biosynthesis</keyword>
<keyword id="KW-0443">Lipid metabolism</keyword>
<keyword id="KW-0520">NAD</keyword>
<keyword id="KW-0521">NADP</keyword>
<keyword id="KW-0547">Nucleotide-binding</keyword>
<keyword id="KW-0560">Oxidoreductase</keyword>
<keyword id="KW-0594">Phospholipid biosynthesis</keyword>
<keyword id="KW-1208">Phospholipid metabolism</keyword>